<accession>P49150</accession>
<dbReference type="EC" id="3.4.21.68"/>
<dbReference type="EMBL" id="M63990">
    <property type="protein sequence ID" value="AAA31595.1"/>
    <property type="molecule type" value="mRNA"/>
</dbReference>
<dbReference type="PIR" id="JS0600">
    <property type="entry name" value="JS0600"/>
</dbReference>
<dbReference type="SMR" id="P49150"/>
<dbReference type="MEROPS" id="S01.232"/>
<dbReference type="GO" id="GO:0005615">
    <property type="term" value="C:extracellular space"/>
    <property type="evidence" value="ECO:0007669"/>
    <property type="project" value="TreeGrafter"/>
</dbReference>
<dbReference type="GO" id="GO:0004252">
    <property type="term" value="F:serine-type endopeptidase activity"/>
    <property type="evidence" value="ECO:0007669"/>
    <property type="project" value="UniProtKB-EC"/>
</dbReference>
<dbReference type="GO" id="GO:0031639">
    <property type="term" value="P:plasminogen activation"/>
    <property type="evidence" value="ECO:0007669"/>
    <property type="project" value="TreeGrafter"/>
</dbReference>
<dbReference type="GO" id="GO:0048008">
    <property type="term" value="P:platelet-derived growth factor receptor signaling pathway"/>
    <property type="evidence" value="ECO:0007669"/>
    <property type="project" value="TreeGrafter"/>
</dbReference>
<dbReference type="GO" id="GO:0014909">
    <property type="term" value="P:smooth muscle cell migration"/>
    <property type="evidence" value="ECO:0007669"/>
    <property type="project" value="TreeGrafter"/>
</dbReference>
<dbReference type="CDD" id="cd00108">
    <property type="entry name" value="KR"/>
    <property type="match status" value="1"/>
</dbReference>
<dbReference type="CDD" id="cd00190">
    <property type="entry name" value="Tryp_SPc"/>
    <property type="match status" value="1"/>
</dbReference>
<dbReference type="FunFam" id="2.40.10.10:FF:000054">
    <property type="entry name" value="Complement C1r subcomponent"/>
    <property type="match status" value="1"/>
</dbReference>
<dbReference type="FunFam" id="2.40.10.10:FF:000058">
    <property type="entry name" value="Tissue-type plasminogen activator"/>
    <property type="match status" value="1"/>
</dbReference>
<dbReference type="FunFam" id="2.40.20.10:FF:000001">
    <property type="entry name" value="Urokinase-type plasminogen activator"/>
    <property type="match status" value="1"/>
</dbReference>
<dbReference type="Gene3D" id="2.40.20.10">
    <property type="entry name" value="Plasminogen Kringle 4"/>
    <property type="match status" value="1"/>
</dbReference>
<dbReference type="Gene3D" id="2.40.10.10">
    <property type="entry name" value="Trypsin-like serine proteases"/>
    <property type="match status" value="2"/>
</dbReference>
<dbReference type="InterPro" id="IPR000001">
    <property type="entry name" value="Kringle"/>
</dbReference>
<dbReference type="InterPro" id="IPR013806">
    <property type="entry name" value="Kringle-like"/>
</dbReference>
<dbReference type="InterPro" id="IPR018056">
    <property type="entry name" value="Kringle_CS"/>
</dbReference>
<dbReference type="InterPro" id="IPR038178">
    <property type="entry name" value="Kringle_sf"/>
</dbReference>
<dbReference type="InterPro" id="IPR009003">
    <property type="entry name" value="Peptidase_S1_PA"/>
</dbReference>
<dbReference type="InterPro" id="IPR043504">
    <property type="entry name" value="Peptidase_S1_PA_chymotrypsin"/>
</dbReference>
<dbReference type="InterPro" id="IPR001314">
    <property type="entry name" value="Peptidase_S1A"/>
</dbReference>
<dbReference type="InterPro" id="IPR050127">
    <property type="entry name" value="Serine_Proteases_S1"/>
</dbReference>
<dbReference type="InterPro" id="IPR001254">
    <property type="entry name" value="Trypsin_dom"/>
</dbReference>
<dbReference type="InterPro" id="IPR018114">
    <property type="entry name" value="TRYPSIN_HIS"/>
</dbReference>
<dbReference type="InterPro" id="IPR033116">
    <property type="entry name" value="TRYPSIN_SER"/>
</dbReference>
<dbReference type="PANTHER" id="PTHR24264:SF42">
    <property type="entry name" value="TISSUE-TYPE PLASMINOGEN ACTIVATOR"/>
    <property type="match status" value="1"/>
</dbReference>
<dbReference type="PANTHER" id="PTHR24264">
    <property type="entry name" value="TRYPSIN-RELATED"/>
    <property type="match status" value="1"/>
</dbReference>
<dbReference type="Pfam" id="PF00051">
    <property type="entry name" value="Kringle"/>
    <property type="match status" value="1"/>
</dbReference>
<dbReference type="Pfam" id="PF00089">
    <property type="entry name" value="Trypsin"/>
    <property type="match status" value="1"/>
</dbReference>
<dbReference type="PRINTS" id="PR00722">
    <property type="entry name" value="CHYMOTRYPSIN"/>
</dbReference>
<dbReference type="PRINTS" id="PR00018">
    <property type="entry name" value="KRINGLE"/>
</dbReference>
<dbReference type="SMART" id="SM00130">
    <property type="entry name" value="KR"/>
    <property type="match status" value="1"/>
</dbReference>
<dbReference type="SMART" id="SM00020">
    <property type="entry name" value="Tryp_SPc"/>
    <property type="match status" value="1"/>
</dbReference>
<dbReference type="SUPFAM" id="SSF57440">
    <property type="entry name" value="Kringle-like"/>
    <property type="match status" value="1"/>
</dbReference>
<dbReference type="SUPFAM" id="SSF50494">
    <property type="entry name" value="Trypsin-like serine proteases"/>
    <property type="match status" value="1"/>
</dbReference>
<dbReference type="PROSITE" id="PS00021">
    <property type="entry name" value="KRINGLE_1"/>
    <property type="match status" value="1"/>
</dbReference>
<dbReference type="PROSITE" id="PS50070">
    <property type="entry name" value="KRINGLE_2"/>
    <property type="match status" value="1"/>
</dbReference>
<dbReference type="PROSITE" id="PS50240">
    <property type="entry name" value="TRYPSIN_DOM"/>
    <property type="match status" value="1"/>
</dbReference>
<dbReference type="PROSITE" id="PS00134">
    <property type="entry name" value="TRYPSIN_HIS"/>
    <property type="match status" value="1"/>
</dbReference>
<dbReference type="PROSITE" id="PS00135">
    <property type="entry name" value="TRYPSIN_SER"/>
    <property type="match status" value="1"/>
</dbReference>
<evidence type="ECO:0000250" key="1"/>
<evidence type="ECO:0000255" key="2"/>
<evidence type="ECO:0000255" key="3">
    <source>
        <dbReference type="PROSITE-ProRule" id="PRU00121"/>
    </source>
</evidence>
<evidence type="ECO:0000255" key="4">
    <source>
        <dbReference type="PROSITE-ProRule" id="PRU00274"/>
    </source>
</evidence>
<organism>
    <name type="scientific">Desmodus rotundus</name>
    <name type="common">Vampire bat</name>
    <dbReference type="NCBI Taxonomy" id="9430"/>
    <lineage>
        <taxon>Eukaryota</taxon>
        <taxon>Metazoa</taxon>
        <taxon>Chordata</taxon>
        <taxon>Craniata</taxon>
        <taxon>Vertebrata</taxon>
        <taxon>Euteleostomi</taxon>
        <taxon>Mammalia</taxon>
        <taxon>Eutheria</taxon>
        <taxon>Laurasiatheria</taxon>
        <taxon>Chiroptera</taxon>
        <taxon>Yangochiroptera</taxon>
        <taxon>Phyllostomidae</taxon>
        <taxon>Desmodontinae</taxon>
        <taxon>Desmodus</taxon>
    </lineage>
</organism>
<reference key="1">
    <citation type="journal article" date="1991" name="Gene">
        <title>The plasminogen activator family from the salivary gland of the vampire bat Desmodus rotundus: cloning and expression.</title>
        <authorList>
            <person name="Kraetzschmar J."/>
            <person name="Haendler B."/>
            <person name="Langer G."/>
            <person name="Boidol W."/>
            <person name="Bringmann P."/>
            <person name="Alagon A."/>
            <person name="Donner P."/>
            <person name="Schleuning W.-D."/>
        </authorList>
    </citation>
    <scope>NUCLEOTIDE SEQUENCE [MRNA]</scope>
    <source>
        <tissue>Salivary gland</tissue>
    </source>
</reference>
<reference key="2">
    <citation type="journal article" date="1992" name="Ann. N. Y. Acad. Sci.">
        <title>Plasminogen activators from the saliva of Desmodus rotundus (common vampire bat): unique fibrin specificity.</title>
        <authorList>
            <person name="Schleuning W.-D."/>
            <person name="Alagon A."/>
            <person name="Boidol W."/>
            <person name="Bringmann P."/>
            <person name="Petri T."/>
            <person name="Kraetzschmar J."/>
            <person name="Haendler B."/>
            <person name="Langer G."/>
            <person name="Baldus B."/>
            <person name="Witt W."/>
            <person name="Donner P."/>
        </authorList>
    </citation>
    <scope>CHARACTERIZATION</scope>
</reference>
<comment type="function">
    <text>Probably essential to support the feeding habits of this exclusively haematophagous animal. Probable potent thrombolytic agent.</text>
</comment>
<comment type="catalytic activity">
    <reaction>
        <text>Specific cleavage of Arg-|-Val bond in plasminogen to form plasmin.</text>
        <dbReference type="EC" id="3.4.21.68"/>
    </reaction>
</comment>
<comment type="subunit">
    <text>Monomer.</text>
</comment>
<comment type="subcellular location">
    <subcellularLocation>
        <location>Secreted</location>
    </subcellularLocation>
</comment>
<comment type="similarity">
    <text evidence="4">Belongs to the peptidase S1 family.</text>
</comment>
<name>URTG_DESRO</name>
<protein>
    <recommendedName>
        <fullName>Salivary plasminogen activator gamma</fullName>
        <ecNumber>3.4.21.68</ecNumber>
    </recommendedName>
    <alternativeName>
        <fullName>DSPA gamma</fullName>
    </alternativeName>
</protein>
<sequence>MVNTMKTKLLCVLLLCGAVFSLPRQETYRQLARGSRAYGDPHATCYKDQGVTYRGTWSTSESGAQCINWNSNLLIRRTYNGRMPEAVKLGLGNHNYCRNPDGASKPWCYVIKARKFTSESCSVPVCSKATCGLRKYKEPQLHSTGGLFTDITSHPWQAAIFAQNRRSSGERFLCGGILISSCWVLTAAHCFQERYPPQHLRVVLGRTYRVKPGKEEQTFEVEKCIVHEEFDDDTYNNDIALLQLKSGSPQCAQESDSVRAICLPEANLQLPDWTECELSGYGKHKSSSPFYSEQLKEGHVRLYPSSRCTSKFLFNKTVTNNMLCAGDTRSGEIYPNVHDACQGDSGGPLVCMNDNHMTLLGIISWGVGCGEKDIPGVYTKVTNYLGWIRDNMRP</sequence>
<keyword id="KW-1015">Disulfide bond</keyword>
<keyword id="KW-0325">Glycoprotein</keyword>
<keyword id="KW-0378">Hydrolase</keyword>
<keyword id="KW-0420">Kringle</keyword>
<keyword id="KW-0617">Plasminogen activation</keyword>
<keyword id="KW-0645">Protease</keyword>
<keyword id="KW-0964">Secreted</keyword>
<keyword id="KW-0720">Serine protease</keyword>
<keyword id="KW-0732">Signal</keyword>
<feature type="signal peptide" evidence="2">
    <location>
        <begin position="1"/>
        <end position="36"/>
    </location>
</feature>
<feature type="chain" id="PRO_0000028343" description="Salivary plasminogen activator gamma">
    <location>
        <begin position="37"/>
        <end position="394"/>
    </location>
</feature>
<feature type="domain" description="Kringle" evidence="3">
    <location>
        <begin position="45"/>
        <end position="126"/>
    </location>
</feature>
<feature type="domain" description="Peptidase S1" evidence="4">
    <location>
        <begin position="143"/>
        <end position="393"/>
    </location>
</feature>
<feature type="active site" description="Charge relay system" evidence="1">
    <location>
        <position position="189"/>
    </location>
</feature>
<feature type="active site" description="Charge relay system" evidence="1">
    <location>
        <position position="238"/>
    </location>
</feature>
<feature type="active site" description="Charge relay system" evidence="1">
    <location>
        <position position="345"/>
    </location>
</feature>
<feature type="glycosylation site" description="N-linked (GlcNAc...) asparagine" evidence="2">
    <location>
        <position position="315"/>
    </location>
</feature>
<feature type="disulfide bond" evidence="1">
    <location>
        <begin position="45"/>
        <end position="126"/>
    </location>
</feature>
<feature type="disulfide bond" evidence="1">
    <location>
        <begin position="66"/>
        <end position="108"/>
    </location>
</feature>
<feature type="disulfide bond" evidence="1">
    <location>
        <begin position="97"/>
        <end position="121"/>
    </location>
</feature>
<feature type="disulfide bond" evidence="1">
    <location>
        <begin position="131"/>
        <end position="262"/>
    </location>
</feature>
<feature type="disulfide bond" evidence="1">
    <location>
        <begin position="174"/>
        <end position="190"/>
    </location>
</feature>
<feature type="disulfide bond" evidence="1">
    <location>
        <begin position="182"/>
        <end position="251"/>
    </location>
</feature>
<feature type="disulfide bond" evidence="1">
    <location>
        <begin position="276"/>
        <end position="351"/>
    </location>
</feature>
<feature type="disulfide bond" evidence="1">
    <location>
        <begin position="308"/>
        <end position="324"/>
    </location>
</feature>
<feature type="disulfide bond" evidence="1">
    <location>
        <begin position="341"/>
        <end position="369"/>
    </location>
</feature>
<proteinExistence type="evidence at protein level"/>